<accession>P0A3F6</accession>
<accession>Q8X4G3</accession>
<name>DSDX_ECO57</name>
<sequence length="72" mass="7740">MLPLYPDISPEIIAIAIGSGAIGCTIVTDSLFWLVKQYCGATLNETFKYYTTATFIASVVALAGTFLLSFII</sequence>
<protein>
    <recommendedName>
        <fullName>Putative D-serine transporter DsdX-like protein</fullName>
    </recommendedName>
</protein>
<reference key="1">
    <citation type="journal article" date="2001" name="Nature">
        <title>Genome sequence of enterohaemorrhagic Escherichia coli O157:H7.</title>
        <authorList>
            <person name="Perna N.T."/>
            <person name="Plunkett G. III"/>
            <person name="Burland V."/>
            <person name="Mau B."/>
            <person name="Glasner J.D."/>
            <person name="Rose D.J."/>
            <person name="Mayhew G.F."/>
            <person name="Evans P.S."/>
            <person name="Gregor J."/>
            <person name="Kirkpatrick H.A."/>
            <person name="Posfai G."/>
            <person name="Hackett J."/>
            <person name="Klink S."/>
            <person name="Boutin A."/>
            <person name="Shao Y."/>
            <person name="Miller L."/>
            <person name="Grotbeck E.J."/>
            <person name="Davis N.W."/>
            <person name="Lim A."/>
            <person name="Dimalanta E.T."/>
            <person name="Potamousis K."/>
            <person name="Apodaca J."/>
            <person name="Anantharaman T.S."/>
            <person name="Lin J."/>
            <person name="Yen G."/>
            <person name="Schwartz D.C."/>
            <person name="Welch R.A."/>
            <person name="Blattner F.R."/>
        </authorList>
    </citation>
    <scope>NUCLEOTIDE SEQUENCE [LARGE SCALE GENOMIC DNA]</scope>
    <source>
        <strain>O157:H7 / EDL933 / ATCC 700927 / EHEC</strain>
    </source>
</reference>
<reference key="2">
    <citation type="journal article" date="2001" name="DNA Res.">
        <title>Complete genome sequence of enterohemorrhagic Escherichia coli O157:H7 and genomic comparison with a laboratory strain K-12.</title>
        <authorList>
            <person name="Hayashi T."/>
            <person name="Makino K."/>
            <person name="Ohnishi M."/>
            <person name="Kurokawa K."/>
            <person name="Ishii K."/>
            <person name="Yokoyama K."/>
            <person name="Han C.-G."/>
            <person name="Ohtsubo E."/>
            <person name="Nakayama K."/>
            <person name="Murata T."/>
            <person name="Tanaka M."/>
            <person name="Tobe T."/>
            <person name="Iida T."/>
            <person name="Takami H."/>
            <person name="Honda T."/>
            <person name="Sasakawa C."/>
            <person name="Ogasawara N."/>
            <person name="Yasunaga T."/>
            <person name="Kuhara S."/>
            <person name="Shiba T."/>
            <person name="Hattori M."/>
            <person name="Shinagawa H."/>
        </authorList>
    </citation>
    <scope>NUCLEOTIDE SEQUENCE [LARGE SCALE GENOMIC DNA]</scope>
    <source>
        <strain>O157:H7 / Sakai / RIMD 0509952 / EHEC</strain>
    </source>
</reference>
<organism>
    <name type="scientific">Escherichia coli O157:H7</name>
    <dbReference type="NCBI Taxonomy" id="83334"/>
    <lineage>
        <taxon>Bacteria</taxon>
        <taxon>Pseudomonadati</taxon>
        <taxon>Pseudomonadota</taxon>
        <taxon>Gammaproteobacteria</taxon>
        <taxon>Enterobacterales</taxon>
        <taxon>Enterobacteriaceae</taxon>
        <taxon>Escherichia</taxon>
    </lineage>
</organism>
<feature type="chain" id="PRO_0000061938" description="Putative D-serine transporter DsdX-like protein">
    <location>
        <begin position="1"/>
        <end position="72"/>
    </location>
</feature>
<evidence type="ECO:0000305" key="1"/>
<dbReference type="EMBL" id="AE005174">
    <property type="protein sequence ID" value="AAG57490.1"/>
    <property type="molecule type" value="Genomic_DNA"/>
</dbReference>
<dbReference type="EMBL" id="BA000007">
    <property type="status" value="NOT_ANNOTATED_CDS"/>
    <property type="molecule type" value="Genomic_DNA"/>
</dbReference>
<dbReference type="PIR" id="F85878">
    <property type="entry name" value="F85878"/>
</dbReference>
<dbReference type="STRING" id="155864.Z3627"/>
<dbReference type="KEGG" id="ece:Z3627"/>
<dbReference type="PATRIC" id="fig|83334.175.peg.2717"/>
<dbReference type="eggNOG" id="COG2610">
    <property type="taxonomic scope" value="Bacteria"/>
</dbReference>
<dbReference type="Proteomes" id="UP000000558">
    <property type="component" value="Chromosome"/>
</dbReference>
<dbReference type="Proteomes" id="UP000002519">
    <property type="component" value="Chromosome"/>
</dbReference>
<dbReference type="GO" id="GO:0005886">
    <property type="term" value="C:plasma membrane"/>
    <property type="evidence" value="ECO:0007669"/>
    <property type="project" value="TreeGrafter"/>
</dbReference>
<dbReference type="GO" id="GO:0015128">
    <property type="term" value="F:gluconate transmembrane transporter activity"/>
    <property type="evidence" value="ECO:0007669"/>
    <property type="project" value="InterPro"/>
</dbReference>
<dbReference type="InterPro" id="IPR003474">
    <property type="entry name" value="Glcn_transporter"/>
</dbReference>
<dbReference type="PANTHER" id="PTHR30354:SF6">
    <property type="entry name" value="D-SERINE TRANSPORTER DSDX"/>
    <property type="match status" value="1"/>
</dbReference>
<dbReference type="PANTHER" id="PTHR30354">
    <property type="entry name" value="GNT FAMILY GLUCONATE TRANSPORTER"/>
    <property type="match status" value="1"/>
</dbReference>
<dbReference type="Pfam" id="PF02447">
    <property type="entry name" value="GntP_permease"/>
    <property type="match status" value="1"/>
</dbReference>
<keyword id="KW-1185">Reference proteome</keyword>
<proteinExistence type="uncertain"/>
<gene>
    <name type="primary">dsdX</name>
    <name type="ordered locus">Z3627</name>
    <name type="ordered locus">ECs3244.1</name>
</gene>
<comment type="caution">
    <text evidence="1">Could be the product of a pseudogene. This sequence is much shorter than E.coli K12 DsdX.</text>
</comment>